<comment type="function">
    <text evidence="1">Produces ATP from ADP in the presence of a proton gradient across the membrane. The gamma chain is believed to be important in regulating ATPase activity and the flow of protons through the CF(0) complex.</text>
</comment>
<comment type="subunit">
    <text evidence="1">F-type ATPases have 2 components, CF(1) - the catalytic core - and CF(0) - the membrane proton channel. CF(1) has five subunits: alpha(3), beta(3), gamma(1), delta(1), epsilon(1). CF(0) has three main subunits: a, b and c.</text>
</comment>
<comment type="subcellular location">
    <subcellularLocation>
        <location evidence="1">Cell membrane</location>
        <topology evidence="1">Peripheral membrane protein</topology>
    </subcellularLocation>
</comment>
<comment type="similarity">
    <text evidence="1">Belongs to the ATPase gamma chain family.</text>
</comment>
<organism>
    <name type="scientific">Symbiobacterium thermophilum (strain DSM 24528 / JCM 14929 / IAM 14863 / T)</name>
    <dbReference type="NCBI Taxonomy" id="292459"/>
    <lineage>
        <taxon>Bacteria</taxon>
        <taxon>Bacillati</taxon>
        <taxon>Bacillota</taxon>
        <taxon>Clostridia</taxon>
        <taxon>Eubacteriales</taxon>
        <taxon>Symbiobacteriaceae</taxon>
        <taxon>Symbiobacterium</taxon>
    </lineage>
</organism>
<gene>
    <name evidence="1" type="primary">atpG</name>
    <name type="ordered locus">STH90</name>
</gene>
<evidence type="ECO:0000255" key="1">
    <source>
        <dbReference type="HAMAP-Rule" id="MF_00815"/>
    </source>
</evidence>
<reference key="1">
    <citation type="journal article" date="2004" name="Nucleic Acids Res.">
        <title>Genome sequence of Symbiobacterium thermophilum, an uncultivable bacterium that depends on microbial commensalism.</title>
        <authorList>
            <person name="Ueda K."/>
            <person name="Yamashita A."/>
            <person name="Ishikawa J."/>
            <person name="Shimada M."/>
            <person name="Watsuji T."/>
            <person name="Morimura K."/>
            <person name="Ikeda H."/>
            <person name="Hattori M."/>
            <person name="Beppu T."/>
        </authorList>
    </citation>
    <scope>NUCLEOTIDE SEQUENCE [LARGE SCALE GENOMIC DNA]</scope>
    <source>
        <strain>DSM 24528 / JCM 14929 / IAM 14863 / T</strain>
    </source>
</reference>
<name>ATPG_SYMTH</name>
<protein>
    <recommendedName>
        <fullName evidence="1">ATP synthase gamma chain</fullName>
    </recommendedName>
    <alternativeName>
        <fullName evidence="1">ATP synthase F1 sector gamma subunit</fullName>
    </alternativeName>
    <alternativeName>
        <fullName evidence="1">F-ATPase gamma subunit</fullName>
    </alternativeName>
</protein>
<feature type="chain" id="PRO_0000073401" description="ATP synthase gamma chain">
    <location>
        <begin position="1"/>
        <end position="288"/>
    </location>
</feature>
<sequence length="288" mass="32179">MAENKKAVQRRIRAVKSTQQITKAMKMVDAAKLRRAQEKVQNARPYSRELAKTLGRLIQAGAGIDHPLLHRRTEGTPTVAYVLLTADRGLAGAFNINVIRKAHQALQKESRPTKLITIGRKGRDYFVKRKIQPVLEFVNLGDNITFALARSVLSKIVDLYLSGEVDEVRVIYTEFVNAVTQRPKEMQLLPIQPAQADGAHTHVEYIYEPSPERVLDTLVPRYAETMFYQLMLESKASEHGARMTAMGNATDNAEEMIAKLTLAYNRARQAAITREISEIVGGANALQG</sequence>
<proteinExistence type="inferred from homology"/>
<keyword id="KW-0066">ATP synthesis</keyword>
<keyword id="KW-1003">Cell membrane</keyword>
<keyword id="KW-0139">CF(1)</keyword>
<keyword id="KW-0375">Hydrogen ion transport</keyword>
<keyword id="KW-0406">Ion transport</keyword>
<keyword id="KW-0472">Membrane</keyword>
<keyword id="KW-1185">Reference proteome</keyword>
<keyword id="KW-0813">Transport</keyword>
<accession>Q67TB8</accession>
<dbReference type="EMBL" id="AP006840">
    <property type="protein sequence ID" value="BAD39075.1"/>
    <property type="molecule type" value="Genomic_DNA"/>
</dbReference>
<dbReference type="RefSeq" id="WP_011194225.1">
    <property type="nucleotide sequence ID" value="NC_006177.1"/>
</dbReference>
<dbReference type="SMR" id="Q67TB8"/>
<dbReference type="STRING" id="292459.STH90"/>
<dbReference type="KEGG" id="sth:STH90"/>
<dbReference type="eggNOG" id="COG0224">
    <property type="taxonomic scope" value="Bacteria"/>
</dbReference>
<dbReference type="HOGENOM" id="CLU_050669_0_1_9"/>
<dbReference type="OrthoDB" id="9812769at2"/>
<dbReference type="Proteomes" id="UP000000417">
    <property type="component" value="Chromosome"/>
</dbReference>
<dbReference type="GO" id="GO:0005886">
    <property type="term" value="C:plasma membrane"/>
    <property type="evidence" value="ECO:0007669"/>
    <property type="project" value="UniProtKB-SubCell"/>
</dbReference>
<dbReference type="GO" id="GO:0045259">
    <property type="term" value="C:proton-transporting ATP synthase complex"/>
    <property type="evidence" value="ECO:0007669"/>
    <property type="project" value="UniProtKB-KW"/>
</dbReference>
<dbReference type="GO" id="GO:0005524">
    <property type="term" value="F:ATP binding"/>
    <property type="evidence" value="ECO:0007669"/>
    <property type="project" value="UniProtKB-UniRule"/>
</dbReference>
<dbReference type="GO" id="GO:0046933">
    <property type="term" value="F:proton-transporting ATP synthase activity, rotational mechanism"/>
    <property type="evidence" value="ECO:0007669"/>
    <property type="project" value="UniProtKB-UniRule"/>
</dbReference>
<dbReference type="GO" id="GO:0042777">
    <property type="term" value="P:proton motive force-driven plasma membrane ATP synthesis"/>
    <property type="evidence" value="ECO:0007669"/>
    <property type="project" value="UniProtKB-UniRule"/>
</dbReference>
<dbReference type="CDD" id="cd12151">
    <property type="entry name" value="F1-ATPase_gamma"/>
    <property type="match status" value="1"/>
</dbReference>
<dbReference type="Gene3D" id="3.40.1380.10">
    <property type="match status" value="1"/>
</dbReference>
<dbReference type="Gene3D" id="1.10.287.80">
    <property type="entry name" value="ATP synthase, gamma subunit, helix hairpin domain"/>
    <property type="match status" value="1"/>
</dbReference>
<dbReference type="HAMAP" id="MF_00815">
    <property type="entry name" value="ATP_synth_gamma_bact"/>
    <property type="match status" value="1"/>
</dbReference>
<dbReference type="InterPro" id="IPR035968">
    <property type="entry name" value="ATP_synth_F1_ATPase_gsu"/>
</dbReference>
<dbReference type="InterPro" id="IPR000131">
    <property type="entry name" value="ATP_synth_F1_gsu"/>
</dbReference>
<dbReference type="InterPro" id="IPR023632">
    <property type="entry name" value="ATP_synth_F1_gsu_CS"/>
</dbReference>
<dbReference type="NCBIfam" id="TIGR01146">
    <property type="entry name" value="ATPsyn_F1gamma"/>
    <property type="match status" value="1"/>
</dbReference>
<dbReference type="PANTHER" id="PTHR11693">
    <property type="entry name" value="ATP SYNTHASE GAMMA CHAIN"/>
    <property type="match status" value="1"/>
</dbReference>
<dbReference type="PANTHER" id="PTHR11693:SF22">
    <property type="entry name" value="ATP SYNTHASE SUBUNIT GAMMA, MITOCHONDRIAL"/>
    <property type="match status" value="1"/>
</dbReference>
<dbReference type="Pfam" id="PF00231">
    <property type="entry name" value="ATP-synt"/>
    <property type="match status" value="1"/>
</dbReference>
<dbReference type="PRINTS" id="PR00126">
    <property type="entry name" value="ATPASEGAMMA"/>
</dbReference>
<dbReference type="SUPFAM" id="SSF52943">
    <property type="entry name" value="ATP synthase (F1-ATPase), gamma subunit"/>
    <property type="match status" value="1"/>
</dbReference>
<dbReference type="PROSITE" id="PS00153">
    <property type="entry name" value="ATPASE_GAMMA"/>
    <property type="match status" value="1"/>
</dbReference>